<organism evidence="9">
    <name type="scientific">Drosophila melanogaster</name>
    <name type="common">Fruit fly</name>
    <dbReference type="NCBI Taxonomy" id="7227"/>
    <lineage>
        <taxon>Eukaryota</taxon>
        <taxon>Metazoa</taxon>
        <taxon>Ecdysozoa</taxon>
        <taxon>Arthropoda</taxon>
        <taxon>Hexapoda</taxon>
        <taxon>Insecta</taxon>
        <taxon>Pterygota</taxon>
        <taxon>Neoptera</taxon>
        <taxon>Endopterygota</taxon>
        <taxon>Diptera</taxon>
        <taxon>Brachycera</taxon>
        <taxon>Muscomorpha</taxon>
        <taxon>Ephydroidea</taxon>
        <taxon>Drosophilidae</taxon>
        <taxon>Drosophila</taxon>
        <taxon>Sophophora</taxon>
    </lineage>
</organism>
<comment type="function">
    <text evidence="3">Required for the formation of DNA double-strand breaks (DSBs) together with nenya and vilya during the meiotic recombination process (PubMed:30615609). Plays a role in DSBs processing into crossovers (PubMed:30615609). Plays a redundant role with nenya in chromosome segregation during female meiosis (PubMed:30615609).</text>
</comment>
<comment type="subunit">
    <text evidence="6">May interact with itself, with nenya and vilya through its RING-type zinc finger.</text>
</comment>
<comment type="subcellular location">
    <subcellularLocation>
        <location evidence="3">Chromosome</location>
    </subcellularLocation>
    <text evidence="3">Localizes to DNA double-strand breaks during female meiosis in both nurse cells and pro-oocytes (PubMed:30615609). During early pachytene, colocalizes with vilya to the central region of the synaptonemal complex (SC) (PubMed:30615609).</text>
</comment>
<comment type="tissue specificity">
    <text evidence="3">Expressed in nurse cell and pro-oocytes (at protein level).</text>
</comment>
<comment type="miscellaneous">
    <text evidence="6">Nenya, narya and vilya contain a RING-type zinc finger domain and are named after the Three Rings of Power given by the elves of Eregion in J.R.R. Tolkien's books.</text>
</comment>
<comment type="sequence caution" evidence="5">
    <conflict type="erroneous initiation">
        <sequence resource="EMBL-CDS" id="AAK93201"/>
    </conflict>
    <text>Extended N-terminus.</text>
</comment>
<name>NARYA_DROME</name>
<sequence>MFRVHCNKCFRHRKTDPAVPFHLTQCRHVICGPCLGQSSLEKNCPLCGQVLKAIQINRDMPTSVANYFADPLRFQQIYRKISKFQADQRASDNLGFYRQLQQLEQNKRQLEGFCKMEAQLNQKVVEEKKRIAELRTYIAYHENAQRMTRRRHSAGERFHTPEFKEAWNTSISTSDKSPSDMPSDSSRRSADLDTQSTRRRSFGSDTKGFRL</sequence>
<keyword id="KW-0158">Chromosome</keyword>
<keyword id="KW-0159">Chromosome partition</keyword>
<keyword id="KW-0469">Meiosis</keyword>
<keyword id="KW-0479">Metal-binding</keyword>
<keyword id="KW-1185">Reference proteome</keyword>
<keyword id="KW-0862">Zinc</keyword>
<keyword id="KW-0863">Zinc-finger</keyword>
<proteinExistence type="evidence at protein level"/>
<accession>Q9VWI4</accession>
<accession>Q7K4P2</accession>
<dbReference type="EMBL" id="AE014298">
    <property type="protein sequence ID" value="AAF48955.1"/>
    <property type="molecule type" value="Genomic_DNA"/>
</dbReference>
<dbReference type="EMBL" id="AY051777">
    <property type="protein sequence ID" value="AAK93201.2"/>
    <property type="status" value="ALT_INIT"/>
    <property type="molecule type" value="mRNA"/>
</dbReference>
<dbReference type="RefSeq" id="NP_573383.1">
    <property type="nucleotide sequence ID" value="NM_133155.4"/>
</dbReference>
<dbReference type="SMR" id="Q9VWI4"/>
<dbReference type="FunCoup" id="Q9VWI4">
    <property type="interactions" value="2"/>
</dbReference>
<dbReference type="IntAct" id="Q9VWI4">
    <property type="interactions" value="3"/>
</dbReference>
<dbReference type="STRING" id="7227.FBpp0074479"/>
<dbReference type="PaxDb" id="7227-FBpp0074479"/>
<dbReference type="DNASU" id="32932"/>
<dbReference type="EnsemblMetazoa" id="FBtr0074710">
    <property type="protein sequence ID" value="FBpp0074479"/>
    <property type="gene ID" value="FBgn0031018"/>
</dbReference>
<dbReference type="GeneID" id="32932"/>
<dbReference type="KEGG" id="dme:Dmel_CG12200"/>
<dbReference type="UCSC" id="CG12200-RA">
    <property type="organism name" value="d. melanogaster"/>
</dbReference>
<dbReference type="AGR" id="FB:FBgn0031018"/>
<dbReference type="CTD" id="32932"/>
<dbReference type="FlyBase" id="FBgn0031018">
    <property type="gene designation" value="narya"/>
</dbReference>
<dbReference type="VEuPathDB" id="VectorBase:FBgn0031018"/>
<dbReference type="eggNOG" id="KOG4739">
    <property type="taxonomic scope" value="Eukaryota"/>
</dbReference>
<dbReference type="GeneTree" id="ENSGT00740000115581"/>
<dbReference type="HOGENOM" id="CLU_1268118_0_0_1"/>
<dbReference type="InParanoid" id="Q9VWI4"/>
<dbReference type="OMA" id="CKMEAQL"/>
<dbReference type="OrthoDB" id="2535391at2759"/>
<dbReference type="PhylomeDB" id="Q9VWI4"/>
<dbReference type="SignaLink" id="Q9VWI4"/>
<dbReference type="BioGRID-ORCS" id="32932">
    <property type="hits" value="0 hits in 3 CRISPR screens"/>
</dbReference>
<dbReference type="GenomeRNAi" id="32932"/>
<dbReference type="PRO" id="PR:Q9VWI4"/>
<dbReference type="Proteomes" id="UP000000803">
    <property type="component" value="Chromosome X"/>
</dbReference>
<dbReference type="Bgee" id="FBgn0031018">
    <property type="expression patterns" value="Expressed in oocyte associated follicle cell (Drosophila) in ovary and 1 other cell type or tissue"/>
</dbReference>
<dbReference type="GO" id="GO:0005694">
    <property type="term" value="C:chromosome"/>
    <property type="evidence" value="ECO:0000314"/>
    <property type="project" value="UniProtKB"/>
</dbReference>
<dbReference type="GO" id="GO:0035861">
    <property type="term" value="C:site of double-strand break"/>
    <property type="evidence" value="ECO:0000314"/>
    <property type="project" value="UniProtKB"/>
</dbReference>
<dbReference type="GO" id="GO:0000795">
    <property type="term" value="C:synaptonemal complex"/>
    <property type="evidence" value="ECO:0000318"/>
    <property type="project" value="GO_Central"/>
</dbReference>
<dbReference type="GO" id="GO:0019789">
    <property type="term" value="F:SUMO transferase activity"/>
    <property type="evidence" value="ECO:0000318"/>
    <property type="project" value="GO_Central"/>
</dbReference>
<dbReference type="GO" id="GO:0008270">
    <property type="term" value="F:zinc ion binding"/>
    <property type="evidence" value="ECO:0000255"/>
    <property type="project" value="FlyBase"/>
</dbReference>
<dbReference type="GO" id="GO:0007129">
    <property type="term" value="P:homologous chromosome pairing at meiosis"/>
    <property type="evidence" value="ECO:0000318"/>
    <property type="project" value="GO_Central"/>
</dbReference>
<dbReference type="GO" id="GO:1903343">
    <property type="term" value="P:positive regulation of meiotic DNA double-strand break formation"/>
    <property type="evidence" value="ECO:0000316"/>
    <property type="project" value="UniProtKB"/>
</dbReference>
<dbReference type="GO" id="GO:0007131">
    <property type="term" value="P:reciprocal meiotic recombination"/>
    <property type="evidence" value="ECO:0007669"/>
    <property type="project" value="InterPro"/>
</dbReference>
<dbReference type="Gene3D" id="3.30.40.10">
    <property type="entry name" value="Zinc/RING finger domain, C3HC4 (zinc finger)"/>
    <property type="match status" value="1"/>
</dbReference>
<dbReference type="InterPro" id="IPR042123">
    <property type="entry name" value="Zip3/RNF212-like"/>
</dbReference>
<dbReference type="InterPro" id="IPR001841">
    <property type="entry name" value="Znf_RING"/>
</dbReference>
<dbReference type="InterPro" id="IPR013083">
    <property type="entry name" value="Znf_RING/FYVE/PHD"/>
</dbReference>
<dbReference type="InterPro" id="IPR017907">
    <property type="entry name" value="Znf_RING_CS"/>
</dbReference>
<dbReference type="PANTHER" id="PTHR22663">
    <property type="entry name" value="RING FINGER PROTEIN NARYA-RELATED"/>
    <property type="match status" value="1"/>
</dbReference>
<dbReference type="PANTHER" id="PTHR22663:SF17">
    <property type="entry name" value="RING FINGER PROTEIN NARYA-RELATED"/>
    <property type="match status" value="1"/>
</dbReference>
<dbReference type="Pfam" id="PF14634">
    <property type="entry name" value="zf-RING_5"/>
    <property type="match status" value="1"/>
</dbReference>
<dbReference type="SUPFAM" id="SSF57850">
    <property type="entry name" value="RING/U-box"/>
    <property type="match status" value="1"/>
</dbReference>
<dbReference type="PROSITE" id="PS00518">
    <property type="entry name" value="ZF_RING_1"/>
    <property type="match status" value="1"/>
</dbReference>
<dbReference type="PROSITE" id="PS50089">
    <property type="entry name" value="ZF_RING_2"/>
    <property type="match status" value="1"/>
</dbReference>
<reference evidence="9" key="1">
    <citation type="journal article" date="2000" name="Science">
        <title>The genome sequence of Drosophila melanogaster.</title>
        <authorList>
            <person name="Adams M.D."/>
            <person name="Celniker S.E."/>
            <person name="Holt R.A."/>
            <person name="Evans C.A."/>
            <person name="Gocayne J.D."/>
            <person name="Amanatides P.G."/>
            <person name="Scherer S.E."/>
            <person name="Li P.W."/>
            <person name="Hoskins R.A."/>
            <person name="Galle R.F."/>
            <person name="George R.A."/>
            <person name="Lewis S.E."/>
            <person name="Richards S."/>
            <person name="Ashburner M."/>
            <person name="Henderson S.N."/>
            <person name="Sutton G.G."/>
            <person name="Wortman J.R."/>
            <person name="Yandell M.D."/>
            <person name="Zhang Q."/>
            <person name="Chen L.X."/>
            <person name="Brandon R.C."/>
            <person name="Rogers Y.-H.C."/>
            <person name="Blazej R.G."/>
            <person name="Champe M."/>
            <person name="Pfeiffer B.D."/>
            <person name="Wan K.H."/>
            <person name="Doyle C."/>
            <person name="Baxter E.G."/>
            <person name="Helt G."/>
            <person name="Nelson C.R."/>
            <person name="Miklos G.L.G."/>
            <person name="Abril J.F."/>
            <person name="Agbayani A."/>
            <person name="An H.-J."/>
            <person name="Andrews-Pfannkoch C."/>
            <person name="Baldwin D."/>
            <person name="Ballew R.M."/>
            <person name="Basu A."/>
            <person name="Baxendale J."/>
            <person name="Bayraktaroglu L."/>
            <person name="Beasley E.M."/>
            <person name="Beeson K.Y."/>
            <person name="Benos P.V."/>
            <person name="Berman B.P."/>
            <person name="Bhandari D."/>
            <person name="Bolshakov S."/>
            <person name="Borkova D."/>
            <person name="Botchan M.R."/>
            <person name="Bouck J."/>
            <person name="Brokstein P."/>
            <person name="Brottier P."/>
            <person name="Burtis K.C."/>
            <person name="Busam D.A."/>
            <person name="Butler H."/>
            <person name="Cadieu E."/>
            <person name="Center A."/>
            <person name="Chandra I."/>
            <person name="Cherry J.M."/>
            <person name="Cawley S."/>
            <person name="Dahlke C."/>
            <person name="Davenport L.B."/>
            <person name="Davies P."/>
            <person name="de Pablos B."/>
            <person name="Delcher A."/>
            <person name="Deng Z."/>
            <person name="Mays A.D."/>
            <person name="Dew I."/>
            <person name="Dietz S.M."/>
            <person name="Dodson K."/>
            <person name="Doup L.E."/>
            <person name="Downes M."/>
            <person name="Dugan-Rocha S."/>
            <person name="Dunkov B.C."/>
            <person name="Dunn P."/>
            <person name="Durbin K.J."/>
            <person name="Evangelista C.C."/>
            <person name="Ferraz C."/>
            <person name="Ferriera S."/>
            <person name="Fleischmann W."/>
            <person name="Fosler C."/>
            <person name="Gabrielian A.E."/>
            <person name="Garg N.S."/>
            <person name="Gelbart W.M."/>
            <person name="Glasser K."/>
            <person name="Glodek A."/>
            <person name="Gong F."/>
            <person name="Gorrell J.H."/>
            <person name="Gu Z."/>
            <person name="Guan P."/>
            <person name="Harris M."/>
            <person name="Harris N.L."/>
            <person name="Harvey D.A."/>
            <person name="Heiman T.J."/>
            <person name="Hernandez J.R."/>
            <person name="Houck J."/>
            <person name="Hostin D."/>
            <person name="Houston K.A."/>
            <person name="Howland T.J."/>
            <person name="Wei M.-H."/>
            <person name="Ibegwam C."/>
            <person name="Jalali M."/>
            <person name="Kalush F."/>
            <person name="Karpen G.H."/>
            <person name="Ke Z."/>
            <person name="Kennison J.A."/>
            <person name="Ketchum K.A."/>
            <person name="Kimmel B.E."/>
            <person name="Kodira C.D."/>
            <person name="Kraft C.L."/>
            <person name="Kravitz S."/>
            <person name="Kulp D."/>
            <person name="Lai Z."/>
            <person name="Lasko P."/>
            <person name="Lei Y."/>
            <person name="Levitsky A.A."/>
            <person name="Li J.H."/>
            <person name="Li Z."/>
            <person name="Liang Y."/>
            <person name="Lin X."/>
            <person name="Liu X."/>
            <person name="Mattei B."/>
            <person name="McIntosh T.C."/>
            <person name="McLeod M.P."/>
            <person name="McPherson D."/>
            <person name="Merkulov G."/>
            <person name="Milshina N.V."/>
            <person name="Mobarry C."/>
            <person name="Morris J."/>
            <person name="Moshrefi A."/>
            <person name="Mount S.M."/>
            <person name="Moy M."/>
            <person name="Murphy B."/>
            <person name="Murphy L."/>
            <person name="Muzny D.M."/>
            <person name="Nelson D.L."/>
            <person name="Nelson D.R."/>
            <person name="Nelson K.A."/>
            <person name="Nixon K."/>
            <person name="Nusskern D.R."/>
            <person name="Pacleb J.M."/>
            <person name="Palazzolo M."/>
            <person name="Pittman G.S."/>
            <person name="Pan S."/>
            <person name="Pollard J."/>
            <person name="Puri V."/>
            <person name="Reese M.G."/>
            <person name="Reinert K."/>
            <person name="Remington K."/>
            <person name="Saunders R.D.C."/>
            <person name="Scheeler F."/>
            <person name="Shen H."/>
            <person name="Shue B.C."/>
            <person name="Siden-Kiamos I."/>
            <person name="Simpson M."/>
            <person name="Skupski M.P."/>
            <person name="Smith T.J."/>
            <person name="Spier E."/>
            <person name="Spradling A.C."/>
            <person name="Stapleton M."/>
            <person name="Strong R."/>
            <person name="Sun E."/>
            <person name="Svirskas R."/>
            <person name="Tector C."/>
            <person name="Turner R."/>
            <person name="Venter E."/>
            <person name="Wang A.H."/>
            <person name="Wang X."/>
            <person name="Wang Z.-Y."/>
            <person name="Wassarman D.A."/>
            <person name="Weinstock G.M."/>
            <person name="Weissenbach J."/>
            <person name="Williams S.M."/>
            <person name="Woodage T."/>
            <person name="Worley K.C."/>
            <person name="Wu D."/>
            <person name="Yang S."/>
            <person name="Yao Q.A."/>
            <person name="Ye J."/>
            <person name="Yeh R.-F."/>
            <person name="Zaveri J.S."/>
            <person name="Zhan M."/>
            <person name="Zhang G."/>
            <person name="Zhao Q."/>
            <person name="Zheng L."/>
            <person name="Zheng X.H."/>
            <person name="Zhong F.N."/>
            <person name="Zhong W."/>
            <person name="Zhou X."/>
            <person name="Zhu S.C."/>
            <person name="Zhu X."/>
            <person name="Smith H.O."/>
            <person name="Gibbs R.A."/>
            <person name="Myers E.W."/>
            <person name="Rubin G.M."/>
            <person name="Venter J.C."/>
        </authorList>
    </citation>
    <scope>NUCLEOTIDE SEQUENCE [LARGE SCALE GENOMIC DNA]</scope>
    <source>
        <strain evidence="9">Berkeley</strain>
    </source>
</reference>
<reference evidence="9" key="2">
    <citation type="journal article" date="2002" name="Genome Biol.">
        <title>Annotation of the Drosophila melanogaster euchromatic genome: a systematic review.</title>
        <authorList>
            <person name="Misra S."/>
            <person name="Crosby M.A."/>
            <person name="Mungall C.J."/>
            <person name="Matthews B.B."/>
            <person name="Campbell K.S."/>
            <person name="Hradecky P."/>
            <person name="Huang Y."/>
            <person name="Kaminker J.S."/>
            <person name="Millburn G.H."/>
            <person name="Prochnik S.E."/>
            <person name="Smith C.D."/>
            <person name="Tupy J.L."/>
            <person name="Whitfield E.J."/>
            <person name="Bayraktaroglu L."/>
            <person name="Berman B.P."/>
            <person name="Bettencourt B.R."/>
            <person name="Celniker S.E."/>
            <person name="de Grey A.D.N.J."/>
            <person name="Drysdale R.A."/>
            <person name="Harris N.L."/>
            <person name="Richter J."/>
            <person name="Russo S."/>
            <person name="Schroeder A.J."/>
            <person name="Shu S.Q."/>
            <person name="Stapleton M."/>
            <person name="Yamada C."/>
            <person name="Ashburner M."/>
            <person name="Gelbart W.M."/>
            <person name="Rubin G.M."/>
            <person name="Lewis S.E."/>
        </authorList>
    </citation>
    <scope>GENOME REANNOTATION</scope>
    <source>
        <strain evidence="9">Berkeley</strain>
    </source>
</reference>
<reference evidence="7" key="3">
    <citation type="submission" date="2003-01" db="EMBL/GenBank/DDBJ databases">
        <authorList>
            <person name="Stapleton M."/>
            <person name="Brokstein P."/>
            <person name="Hong L."/>
            <person name="Agbayani A."/>
            <person name="Carlson J."/>
            <person name="Champe M."/>
            <person name="Chavez C."/>
            <person name="Dorsett V."/>
            <person name="Dresnek D."/>
            <person name="Farfan D."/>
            <person name="Frise E."/>
            <person name="George R."/>
            <person name="Gonzalez M."/>
            <person name="Guarin H."/>
            <person name="Kronmiller B."/>
            <person name="Li P."/>
            <person name="Liao G."/>
            <person name="Miranda A."/>
            <person name="Mungall C.J."/>
            <person name="Nunoo J."/>
            <person name="Pacleb J."/>
            <person name="Paragas V."/>
            <person name="Park S."/>
            <person name="Patel S."/>
            <person name="Phouanenavong S."/>
            <person name="Wan K."/>
            <person name="Yu C."/>
            <person name="Lewis S.E."/>
            <person name="Rubin G.M."/>
            <person name="Celniker S."/>
        </authorList>
    </citation>
    <scope>NUCLEOTIDE SEQUENCE [LARGE SCALE MRNA]</scope>
    <source>
        <strain evidence="7">Berkeley</strain>
    </source>
</reference>
<reference evidence="5" key="4">
    <citation type="journal article" date="2019" name="PLoS Genet.">
        <title>Narya, a RING finger domain-containing protein, is required for meiotic DNA double-strand break formation and crossover maturation in Drosophila melanogaster.</title>
        <authorList>
            <person name="Lake C.M."/>
            <person name="Nielsen R.J."/>
            <person name="Bonner A.M."/>
            <person name="Eche S."/>
            <person name="White-Brown S."/>
            <person name="McKim K.S."/>
            <person name="Hawley R.S."/>
        </authorList>
    </citation>
    <scope>FUNCTION</scope>
    <scope>SUBCELLULAR LOCATION</scope>
    <scope>TISSUE SPECIFICITY</scope>
    <scope>MUTAGENESIS OF 46-LEU--VAL-50</scope>
</reference>
<evidence type="ECO:0000255" key="1">
    <source>
        <dbReference type="PROSITE-ProRule" id="PRU00175"/>
    </source>
</evidence>
<evidence type="ECO:0000256" key="2">
    <source>
        <dbReference type="SAM" id="MobiDB-lite"/>
    </source>
</evidence>
<evidence type="ECO:0000269" key="3">
    <source>
    </source>
</evidence>
<evidence type="ECO:0000303" key="4">
    <source>
    </source>
</evidence>
<evidence type="ECO:0000305" key="5"/>
<evidence type="ECO:0000305" key="6">
    <source>
    </source>
</evidence>
<evidence type="ECO:0000312" key="7">
    <source>
        <dbReference type="EMBL" id="AAK93201.2"/>
    </source>
</evidence>
<evidence type="ECO:0000312" key="8">
    <source>
        <dbReference type="FlyBase" id="FBgn0031018"/>
    </source>
</evidence>
<evidence type="ECO:0000312" key="9">
    <source>
        <dbReference type="Proteomes" id="UP000000803"/>
    </source>
</evidence>
<protein>
    <recommendedName>
        <fullName evidence="4 8">RING finger protein narya</fullName>
    </recommendedName>
</protein>
<feature type="chain" id="PRO_0000447341" description="RING finger protein narya" evidence="5">
    <location>
        <begin position="1"/>
        <end position="211"/>
    </location>
</feature>
<feature type="zinc finger region" description="RING-type" evidence="1">
    <location>
        <begin position="6"/>
        <end position="47"/>
    </location>
</feature>
<feature type="region of interest" description="Disordered" evidence="2">
    <location>
        <begin position="149"/>
        <end position="211"/>
    </location>
</feature>
<feature type="compositionally biased region" description="Basic and acidic residues" evidence="2">
    <location>
        <begin position="153"/>
        <end position="165"/>
    </location>
</feature>
<feature type="compositionally biased region" description="Low complexity" evidence="2">
    <location>
        <begin position="172"/>
        <end position="184"/>
    </location>
</feature>
<feature type="mutagenesis site" description="Disrupts the RING finger domain. During meiosis, DNA double-strand break formation is normal but their conversion into cross-overs fails." evidence="3">
    <location>
        <begin position="46"/>
        <end position="50"/>
    </location>
</feature>
<gene>
    <name evidence="4 8" type="primary">narya</name>
    <name evidence="8" type="ORF">CG12200</name>
</gene>